<organism>
    <name type="scientific">Caenorhabditis briggsae</name>
    <dbReference type="NCBI Taxonomy" id="6238"/>
    <lineage>
        <taxon>Eukaryota</taxon>
        <taxon>Metazoa</taxon>
        <taxon>Ecdysozoa</taxon>
        <taxon>Nematoda</taxon>
        <taxon>Chromadorea</taxon>
        <taxon>Rhabditida</taxon>
        <taxon>Rhabditina</taxon>
        <taxon>Rhabditomorpha</taxon>
        <taxon>Rhabditoidea</taxon>
        <taxon>Rhabditidae</taxon>
        <taxon>Peloderinae</taxon>
        <taxon>Caenorhabditis</taxon>
    </lineage>
</organism>
<keyword id="KW-0158">Chromosome</keyword>
<keyword id="KW-0175">Coiled coil</keyword>
<keyword id="KW-0227">DNA damage</keyword>
<keyword id="KW-0234">DNA repair</keyword>
<keyword id="KW-0479">Metal-binding</keyword>
<keyword id="KW-1185">Reference proteome</keyword>
<keyword id="KW-0862">Zinc</keyword>
<keyword id="KW-0863">Zinc-finger</keyword>
<protein>
    <recommendedName>
        <fullName>UV-stimulated scaffold protein A homolog</fullName>
    </recommendedName>
</protein>
<sequence>MQEDVYRSGIRKNLNRILQELTDDGKLDFESVPYQNLKAEIEKRDEECTEVLCKVLLETASRSGCADRQFVLQLFNEYFCNSSLFRDQILNDPKEFIEIMLETDPIRNPLPGSKSEGNELKSKSLAFIKNWEKMYAKNDARMKCLAVTLRKTKFVDYENGEKKIEEERKRREFLDERRRMIVERTLSLYKSKFEEIKEDVERLKMELETTMEMLVPSFTNSDDVDIPMDIPSTSSKSFELVIEDLSPLIKVNADNDAIVEAFLGAKTVLIHRVQTMRKLAKGLLPLKGAGESLAQSIIDYRDVIKKLVLKADEIRIKTKKKPVQKAKKFDDDFIDVEISIDDILMVQYANEASEDVKEDVKEPEKKLANPKKEEPKVKFVSFGLDLKYWGEERKDVEVPKNNADCHRFWRSADESTVAGTVHDTVYTQRQFTFVGEAPKIDRECLAKLPSGALCKRKDMFKCPLHGPLVDRDANGKPVKDEDRLKEIDRKERKRLKEAEEFSRKIVKEYESKTKRKRKHEEETSVRSRLQKKLFDPKTIQRVSADITSQQRSRLEKNFSHQFSHL</sequence>
<reference key="1">
    <citation type="journal article" date="2003" name="PLoS Biol.">
        <title>The genome sequence of Caenorhabditis briggsae: a platform for comparative genomics.</title>
        <authorList>
            <person name="Stein L.D."/>
            <person name="Bao Z."/>
            <person name="Blasiar D."/>
            <person name="Blumenthal T."/>
            <person name="Brent M.R."/>
            <person name="Chen N."/>
            <person name="Chinwalla A."/>
            <person name="Clarke L."/>
            <person name="Clee C."/>
            <person name="Coghlan A."/>
            <person name="Coulson A."/>
            <person name="D'Eustachio P."/>
            <person name="Fitch D.H.A."/>
            <person name="Fulton L.A."/>
            <person name="Fulton R.E."/>
            <person name="Griffiths-Jones S."/>
            <person name="Harris T.W."/>
            <person name="Hillier L.W."/>
            <person name="Kamath R."/>
            <person name="Kuwabara P.E."/>
            <person name="Mardis E.R."/>
            <person name="Marra M.A."/>
            <person name="Miner T.L."/>
            <person name="Minx P."/>
            <person name="Mullikin J.C."/>
            <person name="Plumb R.W."/>
            <person name="Rogers J."/>
            <person name="Schein J.E."/>
            <person name="Sohrmann M."/>
            <person name="Spieth J."/>
            <person name="Stajich J.E."/>
            <person name="Wei C."/>
            <person name="Willey D."/>
            <person name="Wilson R.K."/>
            <person name="Durbin R.M."/>
            <person name="Waterston R.H."/>
        </authorList>
    </citation>
    <scope>NUCLEOTIDE SEQUENCE [LARGE SCALE GENOMIC DNA]</scope>
    <source>
        <strain>AF16</strain>
    </source>
</reference>
<feature type="chain" id="PRO_0000417998" description="UV-stimulated scaffold protein A homolog">
    <location>
        <begin position="1"/>
        <end position="565"/>
    </location>
</feature>
<feature type="zinc finger region" description="UVSSA-type" evidence="4">
    <location>
        <begin position="441"/>
        <end position="468"/>
    </location>
</feature>
<feature type="region of interest" description="VHS-like">
    <location>
        <begin position="11"/>
        <end position="156"/>
    </location>
</feature>
<feature type="region of interest" description="Disordered" evidence="5">
    <location>
        <begin position="510"/>
        <end position="530"/>
    </location>
</feature>
<feature type="region of interest" description="Disordered" evidence="5">
    <location>
        <begin position="542"/>
        <end position="565"/>
    </location>
</feature>
<feature type="coiled-coil region" evidence="3">
    <location>
        <begin position="155"/>
        <end position="215"/>
    </location>
</feature>
<feature type="coiled-coil region" evidence="3">
    <location>
        <begin position="480"/>
        <end position="510"/>
    </location>
</feature>
<feature type="binding site" evidence="4">
    <location>
        <position position="444"/>
    </location>
    <ligand>
        <name>Zn(2+)</name>
        <dbReference type="ChEBI" id="CHEBI:29105"/>
    </ligand>
</feature>
<feature type="binding site" evidence="4">
    <location>
        <position position="454"/>
    </location>
    <ligand>
        <name>Zn(2+)</name>
        <dbReference type="ChEBI" id="CHEBI:29105"/>
    </ligand>
</feature>
<feature type="binding site" evidence="4">
    <location>
        <position position="462"/>
    </location>
    <ligand>
        <name>Zn(2+)</name>
        <dbReference type="ChEBI" id="CHEBI:29105"/>
    </ligand>
</feature>
<feature type="binding site" evidence="4">
    <location>
        <position position="465"/>
    </location>
    <ligand>
        <name>Zn(2+)</name>
        <dbReference type="ChEBI" id="CHEBI:29105"/>
    </ligand>
</feature>
<dbReference type="EMBL" id="HE601305">
    <property type="protein sequence ID" value="CAP37564.1"/>
    <property type="molecule type" value="Genomic_DNA"/>
</dbReference>
<dbReference type="RefSeq" id="XP_002635591.1">
    <property type="nucleotide sequence ID" value="XM_002635545.1"/>
</dbReference>
<dbReference type="SMR" id="A8XY47"/>
<dbReference type="FunCoup" id="A8XY47">
    <property type="interactions" value="1416"/>
</dbReference>
<dbReference type="STRING" id="6238.A8XY47"/>
<dbReference type="EnsemblMetazoa" id="CBG20579.1">
    <property type="protein sequence ID" value="CBG20579.1"/>
    <property type="gene ID" value="WBGene00039535"/>
</dbReference>
<dbReference type="GeneID" id="8577586"/>
<dbReference type="KEGG" id="cbr:CBG_20579"/>
<dbReference type="CTD" id="8577586"/>
<dbReference type="WormBase" id="CBG20579">
    <property type="protein sequence ID" value="CBP19902"/>
    <property type="gene ID" value="WBGene00039535"/>
    <property type="gene designation" value="Cbr-uvs-1"/>
</dbReference>
<dbReference type="eggNOG" id="KOG2374">
    <property type="taxonomic scope" value="Eukaryota"/>
</dbReference>
<dbReference type="HOGENOM" id="CLU_023577_0_0_1"/>
<dbReference type="InParanoid" id="A8XY47"/>
<dbReference type="OMA" id="KNNADCH"/>
<dbReference type="Proteomes" id="UP000008549">
    <property type="component" value="Unassembled WGS sequence"/>
</dbReference>
<dbReference type="GO" id="GO:0005694">
    <property type="term" value="C:chromosome"/>
    <property type="evidence" value="ECO:0000318"/>
    <property type="project" value="GO_Central"/>
</dbReference>
<dbReference type="GO" id="GO:0000993">
    <property type="term" value="F:RNA polymerase II complex binding"/>
    <property type="evidence" value="ECO:0000318"/>
    <property type="project" value="GO_Central"/>
</dbReference>
<dbReference type="GO" id="GO:0009411">
    <property type="term" value="P:response to UV"/>
    <property type="evidence" value="ECO:0000318"/>
    <property type="project" value="GO_Central"/>
</dbReference>
<dbReference type="GO" id="GO:0006283">
    <property type="term" value="P:transcription-coupled nucleotide-excision repair"/>
    <property type="evidence" value="ECO:0000318"/>
    <property type="project" value="GO_Central"/>
</dbReference>
<dbReference type="InterPro" id="IPR018610">
    <property type="entry name" value="UVSSA"/>
</dbReference>
<dbReference type="InterPro" id="IPR049431">
    <property type="entry name" value="UVSSA_C"/>
</dbReference>
<dbReference type="InterPro" id="IPR049408">
    <property type="entry name" value="UVSSA_N_a-solenoid_rpt"/>
</dbReference>
<dbReference type="PANTHER" id="PTHR28670">
    <property type="entry name" value="UV-STIMULATED SCAFFOLD PROTEIN A"/>
    <property type="match status" value="1"/>
</dbReference>
<dbReference type="PANTHER" id="PTHR28670:SF1">
    <property type="entry name" value="UV-STIMULATED SCAFFOLD PROTEIN A"/>
    <property type="match status" value="1"/>
</dbReference>
<dbReference type="Pfam" id="PF09740">
    <property type="entry name" value="DUF2043"/>
    <property type="match status" value="1"/>
</dbReference>
<dbReference type="Pfam" id="PF20867">
    <property type="entry name" value="UVSSA_N"/>
    <property type="match status" value="1"/>
</dbReference>
<dbReference type="PROSITE" id="PS52058">
    <property type="entry name" value="ZF_UVSSA"/>
    <property type="match status" value="1"/>
</dbReference>
<evidence type="ECO:0000250" key="1">
    <source>
        <dbReference type="UniProtKB" id="Q23088"/>
    </source>
</evidence>
<evidence type="ECO:0000250" key="2">
    <source>
        <dbReference type="UniProtKB" id="Q2YD98"/>
    </source>
</evidence>
<evidence type="ECO:0000255" key="3"/>
<evidence type="ECO:0000255" key="4">
    <source>
        <dbReference type="PROSITE-ProRule" id="PRU01403"/>
    </source>
</evidence>
<evidence type="ECO:0000256" key="5">
    <source>
        <dbReference type="SAM" id="MobiDB-lite"/>
    </source>
</evidence>
<evidence type="ECO:0000305" key="6"/>
<evidence type="ECO:0000312" key="7">
    <source>
        <dbReference type="WormBase" id="CBG20579"/>
    </source>
</evidence>
<comment type="function">
    <text evidence="1 2">Factor involved in transcription-coupled nucleotide excision repair (TC-NER) in response to UV damage. TC-NER allows RNA polymerase II-blocking lesions to be rapidly removed from the transcribed strand of active genes.</text>
</comment>
<comment type="subcellular location">
    <subcellularLocation>
        <location evidence="2">Chromosome</location>
    </subcellularLocation>
    <text evidence="2">Accumulates at UV DNA damage sites.</text>
</comment>
<comment type="similarity">
    <text evidence="6">Belongs to the UVSSA family.</text>
</comment>
<name>UVSSA_CAEBR</name>
<gene>
    <name evidence="7" type="primary">uvs-1</name>
    <name evidence="7" type="ORF">CBG20579</name>
</gene>
<accession>A8XY47</accession>
<proteinExistence type="inferred from homology"/>